<dbReference type="EC" id="3.6.-.-" evidence="1"/>
<dbReference type="EMBL" id="CP000627">
    <property type="protein sequence ID" value="ABQ19488.1"/>
    <property type="status" value="ALT_INIT"/>
    <property type="molecule type" value="Genomic_DNA"/>
</dbReference>
<dbReference type="EMBL" id="CP001235">
    <property type="protein sequence ID" value="ACP08204.1"/>
    <property type="status" value="ALT_INIT"/>
    <property type="molecule type" value="Genomic_DNA"/>
</dbReference>
<dbReference type="RefSeq" id="WP_000205956.1">
    <property type="nucleotide sequence ID" value="NZ_JAACZH010000018.1"/>
</dbReference>
<dbReference type="SMR" id="A5F485"/>
<dbReference type="KEGG" id="vco:VC0395_A2515"/>
<dbReference type="KEGG" id="vcr:VC395_0177"/>
<dbReference type="PATRIC" id="fig|345073.21.peg.167"/>
<dbReference type="eggNOG" id="COG0486">
    <property type="taxonomic scope" value="Bacteria"/>
</dbReference>
<dbReference type="HOGENOM" id="CLU_019624_4_1_6"/>
<dbReference type="OrthoDB" id="9805918at2"/>
<dbReference type="Proteomes" id="UP000000249">
    <property type="component" value="Chromosome 2"/>
</dbReference>
<dbReference type="GO" id="GO:0005829">
    <property type="term" value="C:cytosol"/>
    <property type="evidence" value="ECO:0007669"/>
    <property type="project" value="TreeGrafter"/>
</dbReference>
<dbReference type="GO" id="GO:0005525">
    <property type="term" value="F:GTP binding"/>
    <property type="evidence" value="ECO:0007669"/>
    <property type="project" value="UniProtKB-UniRule"/>
</dbReference>
<dbReference type="GO" id="GO:0003924">
    <property type="term" value="F:GTPase activity"/>
    <property type="evidence" value="ECO:0007669"/>
    <property type="project" value="UniProtKB-UniRule"/>
</dbReference>
<dbReference type="GO" id="GO:0046872">
    <property type="term" value="F:metal ion binding"/>
    <property type="evidence" value="ECO:0007669"/>
    <property type="project" value="UniProtKB-KW"/>
</dbReference>
<dbReference type="GO" id="GO:0030488">
    <property type="term" value="P:tRNA methylation"/>
    <property type="evidence" value="ECO:0007669"/>
    <property type="project" value="TreeGrafter"/>
</dbReference>
<dbReference type="GO" id="GO:0002098">
    <property type="term" value="P:tRNA wobble uridine modification"/>
    <property type="evidence" value="ECO:0007669"/>
    <property type="project" value="TreeGrafter"/>
</dbReference>
<dbReference type="CDD" id="cd04164">
    <property type="entry name" value="trmE"/>
    <property type="match status" value="1"/>
</dbReference>
<dbReference type="CDD" id="cd14858">
    <property type="entry name" value="TrmE_N"/>
    <property type="match status" value="1"/>
</dbReference>
<dbReference type="FunFam" id="3.30.1360.120:FF:000001">
    <property type="entry name" value="tRNA modification GTPase MnmE"/>
    <property type="match status" value="1"/>
</dbReference>
<dbReference type="FunFam" id="3.40.50.300:FF:000249">
    <property type="entry name" value="tRNA modification GTPase MnmE"/>
    <property type="match status" value="1"/>
</dbReference>
<dbReference type="Gene3D" id="3.40.50.300">
    <property type="entry name" value="P-loop containing nucleotide triphosphate hydrolases"/>
    <property type="match status" value="1"/>
</dbReference>
<dbReference type="Gene3D" id="3.30.1360.120">
    <property type="entry name" value="Probable tRNA modification gtpase trme, domain 1"/>
    <property type="match status" value="1"/>
</dbReference>
<dbReference type="Gene3D" id="1.20.120.430">
    <property type="entry name" value="tRNA modification GTPase MnmE domain 2"/>
    <property type="match status" value="1"/>
</dbReference>
<dbReference type="HAMAP" id="MF_00379">
    <property type="entry name" value="GTPase_MnmE"/>
    <property type="match status" value="1"/>
</dbReference>
<dbReference type="InterPro" id="IPR031168">
    <property type="entry name" value="G_TrmE"/>
</dbReference>
<dbReference type="InterPro" id="IPR006073">
    <property type="entry name" value="GTP-bd"/>
</dbReference>
<dbReference type="InterPro" id="IPR018948">
    <property type="entry name" value="GTP-bd_TrmE_N"/>
</dbReference>
<dbReference type="InterPro" id="IPR004520">
    <property type="entry name" value="GTPase_MnmE"/>
</dbReference>
<dbReference type="InterPro" id="IPR027368">
    <property type="entry name" value="MnmE_dom2"/>
</dbReference>
<dbReference type="InterPro" id="IPR025867">
    <property type="entry name" value="MnmE_helical"/>
</dbReference>
<dbReference type="InterPro" id="IPR027417">
    <property type="entry name" value="P-loop_NTPase"/>
</dbReference>
<dbReference type="InterPro" id="IPR005225">
    <property type="entry name" value="Small_GTP-bd"/>
</dbReference>
<dbReference type="InterPro" id="IPR027266">
    <property type="entry name" value="TrmE/GcvT_dom1"/>
</dbReference>
<dbReference type="NCBIfam" id="TIGR00450">
    <property type="entry name" value="mnmE_trmE_thdF"/>
    <property type="match status" value="1"/>
</dbReference>
<dbReference type="NCBIfam" id="NF003661">
    <property type="entry name" value="PRK05291.1-3"/>
    <property type="match status" value="1"/>
</dbReference>
<dbReference type="NCBIfam" id="TIGR00231">
    <property type="entry name" value="small_GTP"/>
    <property type="match status" value="1"/>
</dbReference>
<dbReference type="PANTHER" id="PTHR42714">
    <property type="entry name" value="TRNA MODIFICATION GTPASE GTPBP3"/>
    <property type="match status" value="1"/>
</dbReference>
<dbReference type="PANTHER" id="PTHR42714:SF2">
    <property type="entry name" value="TRNA MODIFICATION GTPASE GTPBP3, MITOCHONDRIAL"/>
    <property type="match status" value="1"/>
</dbReference>
<dbReference type="Pfam" id="PF01926">
    <property type="entry name" value="MMR_HSR1"/>
    <property type="match status" value="1"/>
</dbReference>
<dbReference type="Pfam" id="PF12631">
    <property type="entry name" value="MnmE_helical"/>
    <property type="match status" value="1"/>
</dbReference>
<dbReference type="Pfam" id="PF10396">
    <property type="entry name" value="TrmE_N"/>
    <property type="match status" value="1"/>
</dbReference>
<dbReference type="SUPFAM" id="SSF52540">
    <property type="entry name" value="P-loop containing nucleoside triphosphate hydrolases"/>
    <property type="match status" value="1"/>
</dbReference>
<dbReference type="SUPFAM" id="SSF116878">
    <property type="entry name" value="TrmE connector domain"/>
    <property type="match status" value="1"/>
</dbReference>
<dbReference type="PROSITE" id="PS51709">
    <property type="entry name" value="G_TRME"/>
    <property type="match status" value="1"/>
</dbReference>
<reference key="1">
    <citation type="submission" date="2007-03" db="EMBL/GenBank/DDBJ databases">
        <authorList>
            <person name="Heidelberg J."/>
        </authorList>
    </citation>
    <scope>NUCLEOTIDE SEQUENCE [LARGE SCALE GENOMIC DNA]</scope>
    <source>
        <strain>ATCC 39541 / Classical Ogawa 395 / O395</strain>
    </source>
</reference>
<reference key="2">
    <citation type="journal article" date="2008" name="PLoS ONE">
        <title>A recalibrated molecular clock and independent origins for the cholera pandemic clones.</title>
        <authorList>
            <person name="Feng L."/>
            <person name="Reeves P.R."/>
            <person name="Lan R."/>
            <person name="Ren Y."/>
            <person name="Gao C."/>
            <person name="Zhou Z."/>
            <person name="Ren Y."/>
            <person name="Cheng J."/>
            <person name="Wang W."/>
            <person name="Wang J."/>
            <person name="Qian W."/>
            <person name="Li D."/>
            <person name="Wang L."/>
        </authorList>
    </citation>
    <scope>NUCLEOTIDE SEQUENCE [LARGE SCALE GENOMIC DNA]</scope>
    <source>
        <strain>ATCC 39541 / Classical Ogawa 395 / O395</strain>
    </source>
</reference>
<protein>
    <recommendedName>
        <fullName evidence="1">tRNA modification GTPase MnmE</fullName>
        <ecNumber evidence="1">3.6.-.-</ecNumber>
    </recommendedName>
</protein>
<accession>A5F485</accession>
<accession>C3M325</accession>
<comment type="function">
    <text evidence="1">Exhibits a very high intrinsic GTPase hydrolysis rate. Involved in the addition of a carboxymethylaminomethyl (cmnm) group at the wobble position (U34) of certain tRNAs, forming tRNA-cmnm(5)s(2)U34.</text>
</comment>
<comment type="cofactor">
    <cofactor evidence="1">
        <name>K(+)</name>
        <dbReference type="ChEBI" id="CHEBI:29103"/>
    </cofactor>
    <text evidence="1">Binds 1 potassium ion per subunit.</text>
</comment>
<comment type="subunit">
    <text evidence="1">Homodimer. Heterotetramer of two MnmE and two MnmG subunits.</text>
</comment>
<comment type="subcellular location">
    <subcellularLocation>
        <location evidence="1">Cytoplasm</location>
    </subcellularLocation>
</comment>
<comment type="similarity">
    <text evidence="1">Belongs to the TRAFAC class TrmE-Era-EngA-EngB-Septin-like GTPase superfamily. TrmE GTPase family.</text>
</comment>
<comment type="sequence caution" evidence="2">
    <conflict type="erroneous initiation">
        <sequence resource="EMBL-CDS" id="ABQ19488"/>
    </conflict>
</comment>
<comment type="sequence caution" evidence="2">
    <conflict type="erroneous initiation">
        <sequence resource="EMBL-CDS" id="ACP08204"/>
    </conflict>
</comment>
<keyword id="KW-0963">Cytoplasm</keyword>
<keyword id="KW-0342">GTP-binding</keyword>
<keyword id="KW-0378">Hydrolase</keyword>
<keyword id="KW-0460">Magnesium</keyword>
<keyword id="KW-0479">Metal-binding</keyword>
<keyword id="KW-0547">Nucleotide-binding</keyword>
<keyword id="KW-0630">Potassium</keyword>
<keyword id="KW-0819">tRNA processing</keyword>
<gene>
    <name evidence="1" type="primary">mnmE</name>
    <name evidence="1" type="synonym">thdF</name>
    <name evidence="1" type="synonym">trmE</name>
    <name type="ordered locus">VC0395_A2515</name>
    <name type="ordered locus">VC395_0177</name>
</gene>
<sequence>MTTDTIVAQATALGRGGVGIIRVSGPLAAHVAQTVTGRTLRPRYAEYLPFTDEDGQQLDQGIALFFPNPHSFTGEDVLELQGHGGPVVMDMLIRRILQIKGVRPARPGEFSERAFLNDKMDLTQAEAIADLIDASSEQAAKSALQSLQGEFSKRIHTLVESLIHLRIYVEAAIDFPEEEIDFLADGKVSADLQTIIDNLAAVRREANQGAIMREGMKVVIAGRPNAGKSSLLNALSGKESAIVTDIAGTTRDVLREHIHIDGMPLHIIDTAGLRDASDAVEKIGIERAWEEIRQADRVLFMVDGTTTEATDPQDIWPDFVDKLPENIGITVIRNKADQTGEPLGICHVNQPTLIRLSAKTGQGVDALRQHLKECMGFSGNQEGGFMARRRHLDALERAAEHLAIGQQQLEGYMAGEILAEELRIAQQHLNEITGEFSSDDLLGRIFSSFCIGK</sequence>
<evidence type="ECO:0000255" key="1">
    <source>
        <dbReference type="HAMAP-Rule" id="MF_00379"/>
    </source>
</evidence>
<evidence type="ECO:0000305" key="2"/>
<feature type="chain" id="PRO_0000345937" description="tRNA modification GTPase MnmE">
    <location>
        <begin position="1"/>
        <end position="453"/>
    </location>
</feature>
<feature type="domain" description="TrmE-type G">
    <location>
        <begin position="215"/>
        <end position="376"/>
    </location>
</feature>
<feature type="binding site" evidence="1">
    <location>
        <position position="22"/>
    </location>
    <ligand>
        <name>(6S)-5-formyl-5,6,7,8-tetrahydrofolate</name>
        <dbReference type="ChEBI" id="CHEBI:57457"/>
    </ligand>
</feature>
<feature type="binding site" evidence="1">
    <location>
        <position position="79"/>
    </location>
    <ligand>
        <name>(6S)-5-formyl-5,6,7,8-tetrahydrofolate</name>
        <dbReference type="ChEBI" id="CHEBI:57457"/>
    </ligand>
</feature>
<feature type="binding site" evidence="1">
    <location>
        <position position="119"/>
    </location>
    <ligand>
        <name>(6S)-5-formyl-5,6,7,8-tetrahydrofolate</name>
        <dbReference type="ChEBI" id="CHEBI:57457"/>
    </ligand>
</feature>
<feature type="binding site" evidence="1">
    <location>
        <begin position="225"/>
        <end position="230"/>
    </location>
    <ligand>
        <name>GTP</name>
        <dbReference type="ChEBI" id="CHEBI:37565"/>
    </ligand>
</feature>
<feature type="binding site" evidence="1">
    <location>
        <position position="225"/>
    </location>
    <ligand>
        <name>K(+)</name>
        <dbReference type="ChEBI" id="CHEBI:29103"/>
    </ligand>
</feature>
<feature type="binding site" evidence="1">
    <location>
        <position position="229"/>
    </location>
    <ligand>
        <name>Mg(2+)</name>
        <dbReference type="ChEBI" id="CHEBI:18420"/>
    </ligand>
</feature>
<feature type="binding site" evidence="1">
    <location>
        <begin position="244"/>
        <end position="250"/>
    </location>
    <ligand>
        <name>GTP</name>
        <dbReference type="ChEBI" id="CHEBI:37565"/>
    </ligand>
</feature>
<feature type="binding site" evidence="1">
    <location>
        <position position="244"/>
    </location>
    <ligand>
        <name>K(+)</name>
        <dbReference type="ChEBI" id="CHEBI:29103"/>
    </ligand>
</feature>
<feature type="binding site" evidence="1">
    <location>
        <position position="246"/>
    </location>
    <ligand>
        <name>K(+)</name>
        <dbReference type="ChEBI" id="CHEBI:29103"/>
    </ligand>
</feature>
<feature type="binding site" evidence="1">
    <location>
        <position position="249"/>
    </location>
    <ligand>
        <name>K(+)</name>
        <dbReference type="ChEBI" id="CHEBI:29103"/>
    </ligand>
</feature>
<feature type="binding site" evidence="1">
    <location>
        <position position="250"/>
    </location>
    <ligand>
        <name>Mg(2+)</name>
        <dbReference type="ChEBI" id="CHEBI:18420"/>
    </ligand>
</feature>
<feature type="binding site" evidence="1">
    <location>
        <begin position="269"/>
        <end position="272"/>
    </location>
    <ligand>
        <name>GTP</name>
        <dbReference type="ChEBI" id="CHEBI:37565"/>
    </ligand>
</feature>
<feature type="binding site" evidence="1">
    <location>
        <begin position="334"/>
        <end position="337"/>
    </location>
    <ligand>
        <name>GTP</name>
        <dbReference type="ChEBI" id="CHEBI:37565"/>
    </ligand>
</feature>
<feature type="binding site" evidence="1">
    <location>
        <position position="453"/>
    </location>
    <ligand>
        <name>(6S)-5-formyl-5,6,7,8-tetrahydrofolate</name>
        <dbReference type="ChEBI" id="CHEBI:57457"/>
    </ligand>
</feature>
<organism>
    <name type="scientific">Vibrio cholerae serotype O1 (strain ATCC 39541 / Classical Ogawa 395 / O395)</name>
    <dbReference type="NCBI Taxonomy" id="345073"/>
    <lineage>
        <taxon>Bacteria</taxon>
        <taxon>Pseudomonadati</taxon>
        <taxon>Pseudomonadota</taxon>
        <taxon>Gammaproteobacteria</taxon>
        <taxon>Vibrionales</taxon>
        <taxon>Vibrionaceae</taxon>
        <taxon>Vibrio</taxon>
    </lineage>
</organism>
<proteinExistence type="inferred from homology"/>
<name>MNME_VIBC3</name>